<sequence length="476" mass="53256">MAGRGGRVLLALCAALVAGGWLLTAEAQEPGAPAAGMRRRRRLQQEDGISFEYHRYPELREALVSVWLQCTAISRIYTVGRSFEGRELLVIELSDNPGVHEPGEPEFKYIGNMHGNEAVGRELLIFLAQYLCNEYQKGNETIVNLIHSTRIHIMPSLNPDGFEKAASQPGELKDWFVGRSNAQGIDLNRNFPDLDRIVYVNEKEGGPNNHLLKNLKKIVDQNSKLAPETKAVIHWIMDIPFVLSANLHGGDLVANYPYDETRSGTAHEYSSCPDDAIFQSLARAYSSFNPVMSDPNRPPCRKNDDDSSFVDGTTNGGAWYSVPGGMQDFNYLSSNCFEITVELSCEKFPPEETLKSYWEDNKNSLISYLEQIHRGVKGFVRDLQGNPIANATISVDGIDHDVTSAKDGDYWRLLAPGNYKLTASAPGYLAITKKVAVPFSPAVGVDFELESFSERKEEEKEELMEWWKMMSETLNF</sequence>
<protein>
    <recommendedName>
        <fullName>Carboxypeptidase E</fullName>
        <shortName>CPE</shortName>
        <ecNumber>3.4.17.10</ecNumber>
    </recommendedName>
    <alternativeName>
        <fullName>Carboxypeptidase H</fullName>
        <shortName>CPH</shortName>
    </alternativeName>
    <alternativeName>
        <fullName>Enkephalin convertase</fullName>
    </alternativeName>
    <alternativeName>
        <fullName>Prohormone-processing carboxypeptidase</fullName>
    </alternativeName>
</protein>
<gene>
    <name type="primary">Cpe</name>
</gene>
<accession>Q00493</accession>
<accession>Q64439</accession>
<dbReference type="EC" id="3.4.17.10"/>
<dbReference type="EMBL" id="X61232">
    <property type="protein sequence ID" value="CAA43550.1"/>
    <property type="molecule type" value="mRNA"/>
</dbReference>
<dbReference type="EMBL" id="U23184">
    <property type="protein sequence ID" value="AAB60488.1"/>
    <property type="molecule type" value="mRNA"/>
</dbReference>
<dbReference type="EMBL" id="BC010197">
    <property type="protein sequence ID" value="AAH10197.1"/>
    <property type="molecule type" value="mRNA"/>
</dbReference>
<dbReference type="CCDS" id="CCDS22327.1"/>
<dbReference type="PIR" id="S16383">
    <property type="entry name" value="S16383"/>
</dbReference>
<dbReference type="RefSeq" id="NP_038522.2">
    <property type="nucleotide sequence ID" value="NM_013494.4"/>
</dbReference>
<dbReference type="SMR" id="Q00493"/>
<dbReference type="BioGRID" id="198855">
    <property type="interactions" value="6"/>
</dbReference>
<dbReference type="FunCoup" id="Q00493">
    <property type="interactions" value="527"/>
</dbReference>
<dbReference type="IntAct" id="Q00493">
    <property type="interactions" value="2"/>
</dbReference>
<dbReference type="STRING" id="10090.ENSMUSP00000048555"/>
<dbReference type="MEROPS" id="M14.005"/>
<dbReference type="GlyConnect" id="2185">
    <property type="glycosylation" value="12 N-Linked glycans (2 sites)"/>
</dbReference>
<dbReference type="GlyCosmos" id="Q00493">
    <property type="glycosylation" value="2 sites, 11 glycans"/>
</dbReference>
<dbReference type="GlyGen" id="Q00493">
    <property type="glycosylation" value="2 sites, 12 N-linked glycans (2 sites)"/>
</dbReference>
<dbReference type="iPTMnet" id="Q00493"/>
<dbReference type="PhosphoSitePlus" id="Q00493"/>
<dbReference type="SwissPalm" id="Q00493"/>
<dbReference type="jPOST" id="Q00493"/>
<dbReference type="PaxDb" id="10090-ENSMUSP00000048555"/>
<dbReference type="PeptideAtlas" id="Q00493"/>
<dbReference type="ProteomicsDB" id="283706"/>
<dbReference type="Pumba" id="Q00493"/>
<dbReference type="Antibodypedia" id="16998">
    <property type="antibodies" value="351 antibodies from 36 providers"/>
</dbReference>
<dbReference type="CPTC" id="Q00493">
    <property type="antibodies" value="3 antibodies"/>
</dbReference>
<dbReference type="DNASU" id="12876"/>
<dbReference type="Ensembl" id="ENSMUST00000048967.9">
    <property type="protein sequence ID" value="ENSMUSP00000048555.8"/>
    <property type="gene ID" value="ENSMUSG00000037852.9"/>
</dbReference>
<dbReference type="GeneID" id="12876"/>
<dbReference type="KEGG" id="mmu:12876"/>
<dbReference type="UCSC" id="uc009luw.2">
    <property type="organism name" value="mouse"/>
</dbReference>
<dbReference type="AGR" id="MGI:101932"/>
<dbReference type="CTD" id="1363"/>
<dbReference type="MGI" id="MGI:101932">
    <property type="gene designation" value="Cpe"/>
</dbReference>
<dbReference type="VEuPathDB" id="HostDB:ENSMUSG00000037852"/>
<dbReference type="eggNOG" id="KOG2649">
    <property type="taxonomic scope" value="Eukaryota"/>
</dbReference>
<dbReference type="GeneTree" id="ENSGT00940000157158"/>
<dbReference type="HOGENOM" id="CLU_006722_1_3_1"/>
<dbReference type="InParanoid" id="Q00493"/>
<dbReference type="OMA" id="FEYHRYA"/>
<dbReference type="OrthoDB" id="10249045at2759"/>
<dbReference type="PhylomeDB" id="Q00493"/>
<dbReference type="TreeFam" id="TF315592"/>
<dbReference type="BRENDA" id="3.4.17.10">
    <property type="organism ID" value="3474"/>
</dbReference>
<dbReference type="BioGRID-ORCS" id="12876">
    <property type="hits" value="2 hits in 79 CRISPR screens"/>
</dbReference>
<dbReference type="ChiTaRS" id="Cpe">
    <property type="organism name" value="mouse"/>
</dbReference>
<dbReference type="PRO" id="PR:Q00493"/>
<dbReference type="Proteomes" id="UP000000589">
    <property type="component" value="Chromosome 8"/>
</dbReference>
<dbReference type="RNAct" id="Q00493">
    <property type="molecule type" value="protein"/>
</dbReference>
<dbReference type="Bgee" id="ENSMUSG00000037852">
    <property type="expression patterns" value="Expressed in anterior amygdaloid area and 274 other cell types or tissues"/>
</dbReference>
<dbReference type="ExpressionAtlas" id="Q00493">
    <property type="expression patterns" value="baseline and differential"/>
</dbReference>
<dbReference type="GO" id="GO:0005615">
    <property type="term" value="C:extracellular space"/>
    <property type="evidence" value="ECO:0007005"/>
    <property type="project" value="BHF-UCL"/>
</dbReference>
<dbReference type="GO" id="GO:0005794">
    <property type="term" value="C:Golgi apparatus"/>
    <property type="evidence" value="ECO:0007669"/>
    <property type="project" value="Ensembl"/>
</dbReference>
<dbReference type="GO" id="GO:0030141">
    <property type="term" value="C:secretory granule"/>
    <property type="evidence" value="ECO:0000314"/>
    <property type="project" value="MGI"/>
</dbReference>
<dbReference type="GO" id="GO:0030667">
    <property type="term" value="C:secretory granule membrane"/>
    <property type="evidence" value="ECO:0000314"/>
    <property type="project" value="MGI"/>
</dbReference>
<dbReference type="GO" id="GO:0030658">
    <property type="term" value="C:transport vesicle membrane"/>
    <property type="evidence" value="ECO:0007669"/>
    <property type="project" value="UniProtKB-SubCell"/>
</dbReference>
<dbReference type="GO" id="GO:0004180">
    <property type="term" value="F:carboxypeptidase activity"/>
    <property type="evidence" value="ECO:0000315"/>
    <property type="project" value="MGI"/>
</dbReference>
<dbReference type="GO" id="GO:0050839">
    <property type="term" value="F:cell adhesion molecule binding"/>
    <property type="evidence" value="ECO:0007669"/>
    <property type="project" value="Ensembl"/>
</dbReference>
<dbReference type="GO" id="GO:0004181">
    <property type="term" value="F:metallocarboxypeptidase activity"/>
    <property type="evidence" value="ECO:0000315"/>
    <property type="project" value="MGI"/>
</dbReference>
<dbReference type="GO" id="GO:0042043">
    <property type="term" value="F:neurexin family protein binding"/>
    <property type="evidence" value="ECO:0007669"/>
    <property type="project" value="Ensembl"/>
</dbReference>
<dbReference type="GO" id="GO:0008233">
    <property type="term" value="F:peptidase activity"/>
    <property type="evidence" value="ECO:0000304"/>
    <property type="project" value="Reactome"/>
</dbReference>
<dbReference type="GO" id="GO:0008270">
    <property type="term" value="F:zinc ion binding"/>
    <property type="evidence" value="ECO:0007669"/>
    <property type="project" value="InterPro"/>
</dbReference>
<dbReference type="GO" id="GO:0003214">
    <property type="term" value="P:cardiac left ventricle morphogenesis"/>
    <property type="evidence" value="ECO:0007669"/>
    <property type="project" value="Ensembl"/>
</dbReference>
<dbReference type="GO" id="GO:0030070">
    <property type="term" value="P:insulin processing"/>
    <property type="evidence" value="ECO:0000315"/>
    <property type="project" value="MGI"/>
</dbReference>
<dbReference type="GO" id="GO:0030072">
    <property type="term" value="P:peptide hormone secretion"/>
    <property type="evidence" value="ECO:0000315"/>
    <property type="project" value="MGI"/>
</dbReference>
<dbReference type="GO" id="GO:0072657">
    <property type="term" value="P:protein localization to membrane"/>
    <property type="evidence" value="ECO:0007669"/>
    <property type="project" value="Ensembl"/>
</dbReference>
<dbReference type="GO" id="GO:0033366">
    <property type="term" value="P:protein localization to secretory granule"/>
    <property type="evidence" value="ECO:0000315"/>
    <property type="project" value="MGI"/>
</dbReference>
<dbReference type="GO" id="GO:0016055">
    <property type="term" value="P:Wnt signaling pathway"/>
    <property type="evidence" value="ECO:0007669"/>
    <property type="project" value="Ensembl"/>
</dbReference>
<dbReference type="CDD" id="cd03865">
    <property type="entry name" value="M14_CPE"/>
    <property type="match status" value="1"/>
</dbReference>
<dbReference type="CDD" id="cd11308">
    <property type="entry name" value="Peptidase_M14NE-CP-C_like"/>
    <property type="match status" value="1"/>
</dbReference>
<dbReference type="FunFam" id="2.60.40.1120:FF:000004">
    <property type="entry name" value="Carboxypeptidase E"/>
    <property type="match status" value="1"/>
</dbReference>
<dbReference type="FunFam" id="3.40.630.10:FF:000013">
    <property type="entry name" value="carboxypeptidase N catalytic chain"/>
    <property type="match status" value="1"/>
</dbReference>
<dbReference type="Gene3D" id="2.60.40.1120">
    <property type="entry name" value="Carboxypeptidase-like, regulatory domain"/>
    <property type="match status" value="1"/>
</dbReference>
<dbReference type="Gene3D" id="3.40.630.10">
    <property type="entry name" value="Zn peptidases"/>
    <property type="match status" value="1"/>
</dbReference>
<dbReference type="InterPro" id="IPR008969">
    <property type="entry name" value="CarboxyPept-like_regulatory"/>
</dbReference>
<dbReference type="InterPro" id="IPR034232">
    <property type="entry name" value="M14_CPE_CPD"/>
</dbReference>
<dbReference type="InterPro" id="IPR000834">
    <property type="entry name" value="Peptidase_M14"/>
</dbReference>
<dbReference type="InterPro" id="IPR050753">
    <property type="entry name" value="Peptidase_M14_domain"/>
</dbReference>
<dbReference type="PANTHER" id="PTHR11532:SF92">
    <property type="entry name" value="CARBOXYPEPTIDASE E"/>
    <property type="match status" value="1"/>
</dbReference>
<dbReference type="PANTHER" id="PTHR11532">
    <property type="entry name" value="PROTEASE M14 CARBOXYPEPTIDASE"/>
    <property type="match status" value="1"/>
</dbReference>
<dbReference type="Pfam" id="PF13620">
    <property type="entry name" value="CarboxypepD_reg"/>
    <property type="match status" value="1"/>
</dbReference>
<dbReference type="Pfam" id="PF00246">
    <property type="entry name" value="Peptidase_M14"/>
    <property type="match status" value="1"/>
</dbReference>
<dbReference type="PRINTS" id="PR00765">
    <property type="entry name" value="CRBOXYPTASEA"/>
</dbReference>
<dbReference type="SMART" id="SM00631">
    <property type="entry name" value="Zn_pept"/>
    <property type="match status" value="1"/>
</dbReference>
<dbReference type="SUPFAM" id="SSF49464">
    <property type="entry name" value="Carboxypeptidase regulatory domain-like"/>
    <property type="match status" value="1"/>
</dbReference>
<dbReference type="SUPFAM" id="SSF53187">
    <property type="entry name" value="Zn-dependent exopeptidases"/>
    <property type="match status" value="1"/>
</dbReference>
<dbReference type="PROSITE" id="PS00132">
    <property type="entry name" value="CARBOXYPEPT_ZN_1"/>
    <property type="match status" value="1"/>
</dbReference>
<dbReference type="PROSITE" id="PS00133">
    <property type="entry name" value="CARBOXYPEPT_ZN_2"/>
    <property type="match status" value="1"/>
</dbReference>
<dbReference type="PROSITE" id="PS52035">
    <property type="entry name" value="PEPTIDASE_M14"/>
    <property type="match status" value="1"/>
</dbReference>
<proteinExistence type="evidence at protein level"/>
<reference key="1">
    <citation type="submission" date="1991-08" db="EMBL/GenBank/DDBJ databases">
        <authorList>
            <person name="Parkinson D."/>
        </authorList>
    </citation>
    <scope>NUCLEOTIDE SEQUENCE [MRNA]</scope>
</reference>
<reference key="2">
    <citation type="journal article" date="1995" name="Nat. Genet.">
        <title>Hyperproinsulinaemia in obese fat/fat mice associated with a carboxypeptidase E mutation which reduces enzyme activity.</title>
        <authorList>
            <person name="Naggert J.K."/>
            <person name="Fricker L.D."/>
            <person name="Varlamov O."/>
            <person name="Nishina P.M."/>
            <person name="Rouille Y."/>
            <person name="Steiner D.F."/>
            <person name="Carroll R.J."/>
            <person name="Paigen B.J."/>
            <person name="Leiter E.H."/>
        </authorList>
    </citation>
    <scope>NUCLEOTIDE SEQUENCE [MRNA]</scope>
    <scope>VARIANT PRO-244</scope>
    <scope>DISEASE</scope>
    <source>
        <strain>HRS/J</strain>
    </source>
</reference>
<reference key="3">
    <citation type="journal article" date="2004" name="Genome Res.">
        <title>The status, quality, and expansion of the NIH full-length cDNA project: the Mammalian Gene Collection (MGC).</title>
        <authorList>
            <consortium name="The MGC Project Team"/>
        </authorList>
    </citation>
    <scope>NUCLEOTIDE SEQUENCE [LARGE SCALE MRNA]</scope>
    <source>
        <strain>FVB/N</strain>
        <tissue>Mammary gland</tissue>
    </source>
</reference>
<reference key="4">
    <citation type="submission" date="2007-04" db="UniProtKB">
        <authorList>
            <person name="Lubec G."/>
            <person name="Kang S.U."/>
        </authorList>
    </citation>
    <scope>PROTEIN SEQUENCE OF 43-55; 87-108; 363-374 AND 413-420</scope>
    <scope>IDENTIFICATION BY MASS SPECTROMETRY</scope>
    <source>
        <strain>C57BL/6J</strain>
        <tissue>Brain</tissue>
    </source>
</reference>
<reference key="5">
    <citation type="journal article" date="2000" name="J. Biol. Chem.">
        <title>Lipid raft association of carboxypeptidase E is necessary for its function as a regulated secretory pathway sorting receptor.</title>
        <authorList>
            <person name="Dhanvantari S."/>
            <person name="Loh Y.P."/>
        </authorList>
    </citation>
    <scope>FUNCTION</scope>
    <scope>SUBCELLULAR LOCATION</scope>
</reference>
<reference key="6">
    <citation type="journal article" date="2005" name="J. Cell Sci.">
        <title>Interaction between secretogranin III and carboxypeptidase E facilitates prohormone sorting within secretory granules.</title>
        <authorList>
            <person name="Hosaka M."/>
            <person name="Watanabe T."/>
            <person name="Sakai Y."/>
            <person name="Kato T."/>
            <person name="Takeuchi T."/>
        </authorList>
    </citation>
    <scope>FUNCTION</scope>
    <scope>INTERACTION WITH SCG3</scope>
    <scope>SUBCELLULAR LOCATION</scope>
</reference>
<reference key="7">
    <citation type="journal article" date="2010" name="Cell">
        <title>A tissue-specific atlas of mouse protein phosphorylation and expression.</title>
        <authorList>
            <person name="Huttlin E.L."/>
            <person name="Jedrychowski M.P."/>
            <person name="Elias J.E."/>
            <person name="Goswami T."/>
            <person name="Rad R."/>
            <person name="Beausoleil S.A."/>
            <person name="Villen J."/>
            <person name="Haas W."/>
            <person name="Sowa M.E."/>
            <person name="Gygi S.P."/>
        </authorList>
    </citation>
    <scope>IDENTIFICATION BY MASS SPECTROMETRY [LARGE SCALE ANALYSIS]</scope>
    <source>
        <tissue>Brain</tissue>
        <tissue>Heart</tissue>
    </source>
</reference>
<name>CBPE_MOUSE</name>
<keyword id="KW-0121">Carboxypeptidase</keyword>
<keyword id="KW-0165">Cleavage on pair of basic residues</keyword>
<keyword id="KW-0968">Cytoplasmic vesicle</keyword>
<keyword id="KW-0903">Direct protein sequencing</keyword>
<keyword id="KW-0225">Disease variant</keyword>
<keyword id="KW-0325">Glycoprotein</keyword>
<keyword id="KW-0378">Hydrolase</keyword>
<keyword id="KW-0472">Membrane</keyword>
<keyword id="KW-0479">Metal-binding</keyword>
<keyword id="KW-0482">Metalloprotease</keyword>
<keyword id="KW-0645">Protease</keyword>
<keyword id="KW-1185">Reference proteome</keyword>
<keyword id="KW-0964">Secreted</keyword>
<keyword id="KW-0732">Signal</keyword>
<keyword id="KW-0862">Zinc</keyword>
<keyword id="KW-0865">Zymogen</keyword>
<feature type="signal peptide" evidence="1">
    <location>
        <begin position="1"/>
        <end position="27"/>
    </location>
</feature>
<feature type="propeptide" id="PRO_0000004386" description="Activation peptide" evidence="1">
    <location>
        <begin position="28"/>
        <end position="42"/>
    </location>
</feature>
<feature type="chain" id="PRO_0000004387" description="Carboxypeptidase E">
    <location>
        <begin position="43"/>
        <end position="476"/>
    </location>
</feature>
<feature type="domain" description="Peptidase M14" evidence="5">
    <location>
        <begin position="52"/>
        <end position="372"/>
    </location>
</feature>
<feature type="active site" description="Proton donor/acceptor" evidence="5">
    <location>
        <position position="342"/>
    </location>
</feature>
<feature type="binding site" evidence="5">
    <location>
        <position position="114"/>
    </location>
    <ligand>
        <name>Zn(2+)</name>
        <dbReference type="ChEBI" id="CHEBI:29105"/>
        <note>catalytic</note>
    </ligand>
</feature>
<feature type="binding site" evidence="5">
    <location>
        <position position="117"/>
    </location>
    <ligand>
        <name>Zn(2+)</name>
        <dbReference type="ChEBI" id="CHEBI:29105"/>
        <note>catalytic</note>
    </ligand>
</feature>
<feature type="binding site" evidence="5">
    <location>
        <position position="248"/>
    </location>
    <ligand>
        <name>Zn(2+)</name>
        <dbReference type="ChEBI" id="CHEBI:29105"/>
        <note>catalytic</note>
    </ligand>
</feature>
<feature type="glycosylation site" description="N-linked (GlcNAc...) asparagine" evidence="4">
    <location>
        <position position="139"/>
    </location>
</feature>
<feature type="glycosylation site" description="N-linked (GlcNAc...) asparagine" evidence="4">
    <location>
        <position position="390"/>
    </location>
</feature>
<feature type="sequence variant" description="In hyperproinsulinemia obese fat/fat mice; reduced activity." evidence="8">
    <original>S</original>
    <variation>P</variation>
    <location>
        <position position="244"/>
    </location>
</feature>
<feature type="sequence conflict" description="In Ref. 1; CAA43550." evidence="9" ref="1">
    <original>A</original>
    <variation>R</variation>
    <location>
        <position position="25"/>
    </location>
</feature>
<feature type="sequence conflict" description="In Ref. 1; CAA43550." evidence="9" ref="1">
    <original>R</original>
    <variation>A</variation>
    <location>
        <position position="81"/>
    </location>
</feature>
<feature type="sequence conflict" description="In Ref. 1; CAA43550." evidence="9" ref="1">
    <original>S</original>
    <variation>W</variation>
    <location>
        <position position="167"/>
    </location>
</feature>
<feature type="sequence conflict" description="In Ref. 1; CAA43550." evidence="9" ref="1">
    <original>E</original>
    <variation>Q</variation>
    <location>
        <position position="171"/>
    </location>
</feature>
<feature type="sequence conflict" description="In Ref. 1; CAA43550." evidence="9" ref="1">
    <original>R</original>
    <variation>C</variation>
    <location>
        <position position="301"/>
    </location>
</feature>
<feature type="sequence conflict" description="In Ref. 1; CAA43550." evidence="9" ref="1">
    <original>V</original>
    <variation>D</variation>
    <location>
        <position position="310"/>
    </location>
</feature>
<feature type="sequence conflict" description="In Ref. 1; CAA43550." evidence="9" ref="1">
    <original>S</original>
    <variation>SS</variation>
    <location>
        <position position="334"/>
    </location>
</feature>
<feature type="sequence conflict" description="In Ref. 1; CAA43550." evidence="9" ref="1">
    <original>S</original>
    <variation>T</variation>
    <location>
        <position position="344"/>
    </location>
</feature>
<feature type="sequence conflict" description="In Ref. 1; CAA43550." evidence="9" ref="1">
    <original>S</original>
    <variation>N</variation>
    <location>
        <position position="367"/>
    </location>
</feature>
<feature type="sequence conflict" description="In Ref. 1; CAA43550." evidence="9" ref="1">
    <original>I</original>
    <variation>N</variation>
    <location>
        <position position="388"/>
    </location>
</feature>
<feature type="sequence conflict" description="In Ref. 1; CAA43550." evidence="9" ref="1">
    <original>A</original>
    <variation>D</variation>
    <location>
        <position position="425"/>
    </location>
</feature>
<comment type="function">
    <text evidence="6 7">Sorting receptor that directs prohormones to the regulated secretory pathway. Also acts as a prohormone processing enzyme in neuro/endocrine cells, removing dibasic residues from the C-terminal end of peptide hormone precursors after initial endoprotease cleavage.</text>
</comment>
<comment type="catalytic activity">
    <reaction>
        <text>Release of C-terminal arginine or lysine residues from polypeptides.</text>
        <dbReference type="EC" id="3.4.17.10"/>
    </reaction>
</comment>
<comment type="cofactor">
    <cofactor evidence="2">
        <name>Zn(2+)</name>
        <dbReference type="ChEBI" id="CHEBI:29105"/>
    </cofactor>
    <text evidence="2">Binds 1 zinc ion per subunit.</text>
</comment>
<comment type="subunit">
    <text evidence="7">Interacts with secretogranin III/SCG3.</text>
</comment>
<comment type="subcellular location">
    <subcellularLocation>
        <location evidence="7">Cytoplasmic vesicle</location>
        <location evidence="7">Secretory vesicle</location>
    </subcellularLocation>
    <subcellularLocation>
        <location evidence="3">Cytoplasmic vesicle</location>
        <location evidence="3">Secretory vesicle membrane</location>
        <topology evidence="3">Peripheral membrane protein</topology>
    </subcellularLocation>
    <subcellularLocation>
        <location evidence="3">Secreted</location>
    </subcellularLocation>
    <text evidence="6">Associated with the secretory granule membrane through direct binding to lipid rafts in intragranular conditions.</text>
</comment>
<comment type="disease">
    <text evidence="8">Defects in Cpe are the cause of the fat phenotype. Mice homozygous for the fat mutation develop obesity and hyperglycemia that can be suppressed by treatment with exogenous insulin.</text>
</comment>
<comment type="similarity">
    <text evidence="9">Belongs to the peptidase M14 family.</text>
</comment>
<organism>
    <name type="scientific">Mus musculus</name>
    <name type="common">Mouse</name>
    <dbReference type="NCBI Taxonomy" id="10090"/>
    <lineage>
        <taxon>Eukaryota</taxon>
        <taxon>Metazoa</taxon>
        <taxon>Chordata</taxon>
        <taxon>Craniata</taxon>
        <taxon>Vertebrata</taxon>
        <taxon>Euteleostomi</taxon>
        <taxon>Mammalia</taxon>
        <taxon>Eutheria</taxon>
        <taxon>Euarchontoglires</taxon>
        <taxon>Glires</taxon>
        <taxon>Rodentia</taxon>
        <taxon>Myomorpha</taxon>
        <taxon>Muroidea</taxon>
        <taxon>Muridae</taxon>
        <taxon>Murinae</taxon>
        <taxon>Mus</taxon>
        <taxon>Mus</taxon>
    </lineage>
</organism>
<evidence type="ECO:0000250" key="1"/>
<evidence type="ECO:0000250" key="2">
    <source>
        <dbReference type="UniProtKB" id="P00730"/>
    </source>
</evidence>
<evidence type="ECO:0000250" key="3">
    <source>
        <dbReference type="UniProtKB" id="P15087"/>
    </source>
</evidence>
<evidence type="ECO:0000255" key="4"/>
<evidence type="ECO:0000255" key="5">
    <source>
        <dbReference type="PROSITE-ProRule" id="PRU01379"/>
    </source>
</evidence>
<evidence type="ECO:0000269" key="6">
    <source>
    </source>
</evidence>
<evidence type="ECO:0000269" key="7">
    <source>
    </source>
</evidence>
<evidence type="ECO:0000269" key="8">
    <source>
    </source>
</evidence>
<evidence type="ECO:0000305" key="9"/>